<comment type="subcellular location">
    <subcellularLocation>
        <location evidence="3">Cell membrane</location>
        <topology evidence="3">Multi-pass membrane protein</topology>
    </subcellularLocation>
</comment>
<sequence>MAKPRNAAESKAAKAQANAARKAAARQRRAQLWQAFTLQRKEDKRLLPYMIGAFLLIVGASVGVGVWAGGFTMFTMIPLGVLLGALVAFVIFGRRAQRTVYRKAEGQTGAAAWALDNLRGKWRVTPGVAATGNLDAVHRVIGRPGVIFVGEGSAARVKPLLAQEKKRTARLVGDVPIYDIIVGNGDGEVPLAKLERHLTRLPANITVKQMDTVESRLAALGSRAGAGVMPKGPLPTTAKMRSVQRTVRRK</sequence>
<protein>
    <recommendedName>
        <fullName>Uncharacterized protein MT2276</fullName>
    </recommendedName>
</protein>
<accession>P9WLI0</accession>
<accession>L0TBU9</accession>
<accession>Q10405</accession>
<feature type="signal peptide" evidence="1">
    <location>
        <begin position="1"/>
        <end position="19"/>
    </location>
</feature>
<feature type="chain" id="PRO_0000427475" description="Uncharacterized protein MT2276">
    <location>
        <begin position="20"/>
        <end position="250"/>
    </location>
</feature>
<feature type="transmembrane region" description="Helical" evidence="1">
    <location>
        <begin position="51"/>
        <end position="71"/>
    </location>
</feature>
<feature type="transmembrane region" description="Helical" evidence="1">
    <location>
        <begin position="73"/>
        <end position="93"/>
    </location>
</feature>
<feature type="region of interest" description="Disordered" evidence="2">
    <location>
        <begin position="226"/>
        <end position="250"/>
    </location>
</feature>
<organism>
    <name type="scientific">Mycobacterium tuberculosis (strain CDC 1551 / Oshkosh)</name>
    <dbReference type="NCBI Taxonomy" id="83331"/>
    <lineage>
        <taxon>Bacteria</taxon>
        <taxon>Bacillati</taxon>
        <taxon>Actinomycetota</taxon>
        <taxon>Actinomycetes</taxon>
        <taxon>Mycobacteriales</taxon>
        <taxon>Mycobacteriaceae</taxon>
        <taxon>Mycobacterium</taxon>
        <taxon>Mycobacterium tuberculosis complex</taxon>
    </lineage>
</organism>
<name>Y2219_MYCTO</name>
<dbReference type="EMBL" id="AE000516">
    <property type="protein sequence ID" value="AAK46561.1"/>
    <property type="molecule type" value="Genomic_DNA"/>
</dbReference>
<dbReference type="PIR" id="D70787">
    <property type="entry name" value="D70787"/>
</dbReference>
<dbReference type="RefSeq" id="WP_003411463.1">
    <property type="nucleotide sequence ID" value="NZ_KK341227.1"/>
</dbReference>
<dbReference type="KEGG" id="mtc:MT2276"/>
<dbReference type="PATRIC" id="fig|83331.31.peg.2450"/>
<dbReference type="HOGENOM" id="CLU_089257_0_0_11"/>
<dbReference type="Proteomes" id="UP000001020">
    <property type="component" value="Chromosome"/>
</dbReference>
<dbReference type="GO" id="GO:0005886">
    <property type="term" value="C:plasma membrane"/>
    <property type="evidence" value="ECO:0007669"/>
    <property type="project" value="UniProtKB-SubCell"/>
</dbReference>
<dbReference type="InterPro" id="IPR025445">
    <property type="entry name" value="DUF4191"/>
</dbReference>
<dbReference type="Pfam" id="PF13829">
    <property type="entry name" value="DUF4191"/>
    <property type="match status" value="1"/>
</dbReference>
<evidence type="ECO:0000255" key="1"/>
<evidence type="ECO:0000256" key="2">
    <source>
        <dbReference type="SAM" id="MobiDB-lite"/>
    </source>
</evidence>
<evidence type="ECO:0000305" key="3"/>
<gene>
    <name type="ordered locus">MT2276</name>
</gene>
<reference key="1">
    <citation type="journal article" date="2002" name="J. Bacteriol.">
        <title>Whole-genome comparison of Mycobacterium tuberculosis clinical and laboratory strains.</title>
        <authorList>
            <person name="Fleischmann R.D."/>
            <person name="Alland D."/>
            <person name="Eisen J.A."/>
            <person name="Carpenter L."/>
            <person name="White O."/>
            <person name="Peterson J.D."/>
            <person name="DeBoy R.T."/>
            <person name="Dodson R.J."/>
            <person name="Gwinn M.L."/>
            <person name="Haft D.H."/>
            <person name="Hickey E.K."/>
            <person name="Kolonay J.F."/>
            <person name="Nelson W.C."/>
            <person name="Umayam L.A."/>
            <person name="Ermolaeva M.D."/>
            <person name="Salzberg S.L."/>
            <person name="Delcher A."/>
            <person name="Utterback T.R."/>
            <person name="Weidman J.F."/>
            <person name="Khouri H.M."/>
            <person name="Gill J."/>
            <person name="Mikula A."/>
            <person name="Bishai W."/>
            <person name="Jacobs W.R. Jr."/>
            <person name="Venter J.C."/>
            <person name="Fraser C.M."/>
        </authorList>
    </citation>
    <scope>NUCLEOTIDE SEQUENCE [LARGE SCALE GENOMIC DNA]</scope>
    <source>
        <strain>CDC 1551 / Oshkosh</strain>
    </source>
</reference>
<keyword id="KW-1003">Cell membrane</keyword>
<keyword id="KW-0472">Membrane</keyword>
<keyword id="KW-1185">Reference proteome</keyword>
<keyword id="KW-0732">Signal</keyword>
<keyword id="KW-0812">Transmembrane</keyword>
<keyword id="KW-1133">Transmembrane helix</keyword>
<proteinExistence type="inferred from homology"/>